<name>PPR86_ARATH</name>
<reference key="1">
    <citation type="journal article" date="2000" name="Nature">
        <title>Sequence and analysis of chromosome 1 of the plant Arabidopsis thaliana.</title>
        <authorList>
            <person name="Theologis A."/>
            <person name="Ecker J.R."/>
            <person name="Palm C.J."/>
            <person name="Federspiel N.A."/>
            <person name="Kaul S."/>
            <person name="White O."/>
            <person name="Alonso J."/>
            <person name="Altafi H."/>
            <person name="Araujo R."/>
            <person name="Bowman C.L."/>
            <person name="Brooks S.Y."/>
            <person name="Buehler E."/>
            <person name="Chan A."/>
            <person name="Chao Q."/>
            <person name="Chen H."/>
            <person name="Cheuk R.F."/>
            <person name="Chin C.W."/>
            <person name="Chung M.K."/>
            <person name="Conn L."/>
            <person name="Conway A.B."/>
            <person name="Conway A.R."/>
            <person name="Creasy T.H."/>
            <person name="Dewar K."/>
            <person name="Dunn P."/>
            <person name="Etgu P."/>
            <person name="Feldblyum T.V."/>
            <person name="Feng J.-D."/>
            <person name="Fong B."/>
            <person name="Fujii C.Y."/>
            <person name="Gill J.E."/>
            <person name="Goldsmith A.D."/>
            <person name="Haas B."/>
            <person name="Hansen N.F."/>
            <person name="Hughes B."/>
            <person name="Huizar L."/>
            <person name="Hunter J.L."/>
            <person name="Jenkins J."/>
            <person name="Johnson-Hopson C."/>
            <person name="Khan S."/>
            <person name="Khaykin E."/>
            <person name="Kim C.J."/>
            <person name="Koo H.L."/>
            <person name="Kremenetskaia I."/>
            <person name="Kurtz D.B."/>
            <person name="Kwan A."/>
            <person name="Lam B."/>
            <person name="Langin-Hooper S."/>
            <person name="Lee A."/>
            <person name="Lee J.M."/>
            <person name="Lenz C.A."/>
            <person name="Li J.H."/>
            <person name="Li Y.-P."/>
            <person name="Lin X."/>
            <person name="Liu S.X."/>
            <person name="Liu Z.A."/>
            <person name="Luros J.S."/>
            <person name="Maiti R."/>
            <person name="Marziali A."/>
            <person name="Militscher J."/>
            <person name="Miranda M."/>
            <person name="Nguyen M."/>
            <person name="Nierman W.C."/>
            <person name="Osborne B.I."/>
            <person name="Pai G."/>
            <person name="Peterson J."/>
            <person name="Pham P.K."/>
            <person name="Rizzo M."/>
            <person name="Rooney T."/>
            <person name="Rowley D."/>
            <person name="Sakano H."/>
            <person name="Salzberg S.L."/>
            <person name="Schwartz J.R."/>
            <person name="Shinn P."/>
            <person name="Southwick A.M."/>
            <person name="Sun H."/>
            <person name="Tallon L.J."/>
            <person name="Tambunga G."/>
            <person name="Toriumi M.J."/>
            <person name="Town C.D."/>
            <person name="Utterback T."/>
            <person name="Van Aken S."/>
            <person name="Vaysberg M."/>
            <person name="Vysotskaia V.S."/>
            <person name="Walker M."/>
            <person name="Wu D."/>
            <person name="Yu G."/>
            <person name="Fraser C.M."/>
            <person name="Venter J.C."/>
            <person name="Davis R.W."/>
        </authorList>
    </citation>
    <scope>NUCLEOTIDE SEQUENCE [LARGE SCALE GENOMIC DNA]</scope>
    <source>
        <strain>cv. Columbia</strain>
    </source>
</reference>
<reference key="2">
    <citation type="journal article" date="2017" name="Plant J.">
        <title>Araport11: a complete reannotation of the Arabidopsis thaliana reference genome.</title>
        <authorList>
            <person name="Cheng C.Y."/>
            <person name="Krishnakumar V."/>
            <person name="Chan A.P."/>
            <person name="Thibaud-Nissen F."/>
            <person name="Schobel S."/>
            <person name="Town C.D."/>
        </authorList>
    </citation>
    <scope>GENOME REANNOTATION</scope>
    <source>
        <strain>cv. Columbia</strain>
    </source>
</reference>
<reference key="3">
    <citation type="journal article" date="2003" name="Science">
        <title>Empirical analysis of transcriptional activity in the Arabidopsis genome.</title>
        <authorList>
            <person name="Yamada K."/>
            <person name="Lim J."/>
            <person name="Dale J.M."/>
            <person name="Chen H."/>
            <person name="Shinn P."/>
            <person name="Palm C.J."/>
            <person name="Southwick A.M."/>
            <person name="Wu H.C."/>
            <person name="Kim C.J."/>
            <person name="Nguyen M."/>
            <person name="Pham P.K."/>
            <person name="Cheuk R.F."/>
            <person name="Karlin-Newmann G."/>
            <person name="Liu S.X."/>
            <person name="Lam B."/>
            <person name="Sakano H."/>
            <person name="Wu T."/>
            <person name="Yu G."/>
            <person name="Miranda M."/>
            <person name="Quach H.L."/>
            <person name="Tripp M."/>
            <person name="Chang C.H."/>
            <person name="Lee J.M."/>
            <person name="Toriumi M.J."/>
            <person name="Chan M.M."/>
            <person name="Tang C.C."/>
            <person name="Onodera C.S."/>
            <person name="Deng J.M."/>
            <person name="Akiyama K."/>
            <person name="Ansari Y."/>
            <person name="Arakawa T."/>
            <person name="Banh J."/>
            <person name="Banno F."/>
            <person name="Bowser L."/>
            <person name="Brooks S.Y."/>
            <person name="Carninci P."/>
            <person name="Chao Q."/>
            <person name="Choy N."/>
            <person name="Enju A."/>
            <person name="Goldsmith A.D."/>
            <person name="Gurjal M."/>
            <person name="Hansen N.F."/>
            <person name="Hayashizaki Y."/>
            <person name="Johnson-Hopson C."/>
            <person name="Hsuan V.W."/>
            <person name="Iida K."/>
            <person name="Karnes M."/>
            <person name="Khan S."/>
            <person name="Koesema E."/>
            <person name="Ishida J."/>
            <person name="Jiang P.X."/>
            <person name="Jones T."/>
            <person name="Kawai J."/>
            <person name="Kamiya A."/>
            <person name="Meyers C."/>
            <person name="Nakajima M."/>
            <person name="Narusaka M."/>
            <person name="Seki M."/>
            <person name="Sakurai T."/>
            <person name="Satou M."/>
            <person name="Tamse R."/>
            <person name="Vaysberg M."/>
            <person name="Wallender E.K."/>
            <person name="Wong C."/>
            <person name="Yamamura Y."/>
            <person name="Yuan S."/>
            <person name="Shinozaki K."/>
            <person name="Davis R.W."/>
            <person name="Theologis A."/>
            <person name="Ecker J.R."/>
        </authorList>
    </citation>
    <scope>NUCLEOTIDE SEQUENCE [LARGE SCALE MRNA]</scope>
    <source>
        <strain>cv. Columbia</strain>
    </source>
</reference>
<reference key="4">
    <citation type="journal article" date="2004" name="Plant Cell">
        <title>Genome-wide analysis of Arabidopsis pentatricopeptide repeat proteins reveals their essential role in organelle biogenesis.</title>
        <authorList>
            <person name="Lurin C."/>
            <person name="Andres C."/>
            <person name="Aubourg S."/>
            <person name="Bellaoui M."/>
            <person name="Bitton F."/>
            <person name="Bruyere C."/>
            <person name="Caboche M."/>
            <person name="Debast C."/>
            <person name="Gualberto J."/>
            <person name="Hoffmann B."/>
            <person name="Lecharny A."/>
            <person name="Le Ret M."/>
            <person name="Martin-Magniette M.-L."/>
            <person name="Mireau H."/>
            <person name="Peeters N."/>
            <person name="Renou J.-P."/>
            <person name="Szurek B."/>
            <person name="Taconnat L."/>
            <person name="Small I."/>
        </authorList>
    </citation>
    <scope>GENE FAMILY</scope>
</reference>
<reference key="5">
    <citation type="journal article" date="2023" name="Plant Cell">
        <title>An updated nomenclature for plant ribosomal protein genes.</title>
        <authorList>
            <person name="Scarpin M.R."/>
            <person name="Busche M."/>
            <person name="Martinez R.E."/>
            <person name="Harper L.C."/>
            <person name="Reiser L."/>
            <person name="Szakonyi D."/>
            <person name="Merchante C."/>
            <person name="Lan T."/>
            <person name="Xiong W."/>
            <person name="Mo B."/>
            <person name="Tang G."/>
            <person name="Chen X."/>
            <person name="Bailey-Serres J."/>
            <person name="Browning K.S."/>
            <person name="Brunkard J.O."/>
        </authorList>
    </citation>
    <scope>NOMENCLATURE</scope>
</reference>
<comment type="subunit">
    <text evidence="3">Component of the mitochondrial ribosome large subunit.</text>
</comment>
<comment type="subcellular location">
    <subcellularLocation>
        <location evidence="1">Mitochondrion</location>
    </subcellularLocation>
</comment>
<comment type="similarity">
    <text evidence="2">Belongs to the PPR family. P subfamily.</text>
</comment>
<comment type="online information" name="Pentatricopeptide repeat proteins">
    <link uri="https://ppr.plantenergy.uwa.edu.au"/>
</comment>
<keyword id="KW-0002">3D-structure</keyword>
<keyword id="KW-0496">Mitochondrion</keyword>
<keyword id="KW-1185">Reference proteome</keyword>
<keyword id="KW-0677">Repeat</keyword>
<keyword id="KW-0687">Ribonucleoprotein</keyword>
<keyword id="KW-0689">Ribosomal protein</keyword>
<feature type="chain" id="PRO_0000342827" description="Large ribosomal subunit protein mL101 (rPPR4)">
    <location>
        <begin position="1"/>
        <end position="491"/>
    </location>
</feature>
<feature type="repeat" description="PPR 1">
    <location>
        <begin position="122"/>
        <end position="156"/>
    </location>
</feature>
<feature type="repeat" description="PPR 2">
    <location>
        <begin position="157"/>
        <end position="191"/>
    </location>
</feature>
<feature type="repeat" description="PPR 3">
    <location>
        <begin position="192"/>
        <end position="226"/>
    </location>
</feature>
<feature type="repeat" description="PPR 4">
    <location>
        <begin position="228"/>
        <end position="262"/>
    </location>
</feature>
<feature type="repeat" description="PPR 5">
    <location>
        <begin position="263"/>
        <end position="293"/>
    </location>
</feature>
<feature type="repeat" description="PPR 6">
    <location>
        <begin position="298"/>
        <end position="328"/>
    </location>
</feature>
<feature type="repeat" description="PPR 7">
    <location>
        <begin position="333"/>
        <end position="367"/>
    </location>
</feature>
<feature type="repeat" description="PPR 8">
    <location>
        <begin position="368"/>
        <end position="402"/>
    </location>
</feature>
<sequence length="491" mass="55905">MAMRHLSRSRDVTKRSTKKYIEEPLYNRLFKDGGTEVKVRQQLNQFLKGTKHVFKWEVGDTIKKLRNRGLYYPALKLSEVMEERGMNKTVSDQAIHLDLVAKAREITAGENYFVDLPETSKTELTYGSLLNCYCKELLTEKAEGLLNKMKELNITPSSMSYNSLMTLYTKTGETEKVPAMIQELKAENVMPDSYTYNVWMRALAATNDISGVERVIEEMNRDGRVAPDWTTYSNMASIYVDAGLSQKAEKALQELEMKNTQRDFTAYQFLITLYGRLGKLTEVYRIWRSLRLAIPKTSNVAYLNMIQVLVKLNDLPGAETLFKEWQANCSTYDIRIVNVLIGAYAQEGLIQKANELKEKAPRRGGKLNAKTWEIFMDYYVKSGDMARALECMSKAVSIGKGDGGKWLPSPETVRALMSYFEQKKDVNGAENLLEILKNGTDNIGAEIFEPLIRTYAAAGKSHPAMRRRLKMENVEVNEATKKLLDEVSQDV</sequence>
<organism>
    <name type="scientific">Arabidopsis thaliana</name>
    <name type="common">Mouse-ear cress</name>
    <dbReference type="NCBI Taxonomy" id="3702"/>
    <lineage>
        <taxon>Eukaryota</taxon>
        <taxon>Viridiplantae</taxon>
        <taxon>Streptophyta</taxon>
        <taxon>Embryophyta</taxon>
        <taxon>Tracheophyta</taxon>
        <taxon>Spermatophyta</taxon>
        <taxon>Magnoliopsida</taxon>
        <taxon>eudicotyledons</taxon>
        <taxon>Gunneridae</taxon>
        <taxon>Pentapetalae</taxon>
        <taxon>rosids</taxon>
        <taxon>malvids</taxon>
        <taxon>Brassicales</taxon>
        <taxon>Brassicaceae</taxon>
        <taxon>Camelineae</taxon>
        <taxon>Arabidopsis</taxon>
    </lineage>
</organism>
<accession>O22714</accession>
<gene>
    <name type="ordered locus">At1g60770</name>
    <name type="ORF">F8A5.28</name>
</gene>
<proteinExistence type="evidence at protein level"/>
<evidence type="ECO:0000303" key="1">
    <source>
    </source>
</evidence>
<evidence type="ECO:0000305" key="2"/>
<evidence type="ECO:0000305" key="3">
    <source>
    </source>
</evidence>
<protein>
    <recommendedName>
        <fullName evidence="1">Large ribosomal subunit protein mL101 (rPPR4)</fullName>
    </recommendedName>
    <alternativeName>
        <fullName>Pentatricopeptide repeat-containing protein At1g60770</fullName>
    </alternativeName>
</protein>
<dbReference type="EMBL" id="AC002292">
    <property type="protein sequence ID" value="AAB71963.1"/>
    <property type="molecule type" value="Genomic_DNA"/>
</dbReference>
<dbReference type="EMBL" id="CP002684">
    <property type="protein sequence ID" value="AEE33730.1"/>
    <property type="molecule type" value="Genomic_DNA"/>
</dbReference>
<dbReference type="EMBL" id="BT002876">
    <property type="protein sequence ID" value="AAO22693.1"/>
    <property type="molecule type" value="mRNA"/>
</dbReference>
<dbReference type="EMBL" id="BT004401">
    <property type="protein sequence ID" value="AAO42395.1"/>
    <property type="molecule type" value="mRNA"/>
</dbReference>
<dbReference type="PIR" id="B96633">
    <property type="entry name" value="B96633"/>
</dbReference>
<dbReference type="RefSeq" id="NP_176276.1">
    <property type="nucleotide sequence ID" value="NM_104760.2"/>
</dbReference>
<dbReference type="PDB" id="6XYW">
    <property type="method" value="EM"/>
    <property type="resolution" value="3.86 A"/>
    <property type="chains" value="AO=1-491"/>
</dbReference>
<dbReference type="PDBsum" id="6XYW"/>
<dbReference type="EMDB" id="EMD-10654"/>
<dbReference type="SMR" id="O22714"/>
<dbReference type="BioGRID" id="27595">
    <property type="interactions" value="3"/>
</dbReference>
<dbReference type="FunCoup" id="O22714">
    <property type="interactions" value="1879"/>
</dbReference>
<dbReference type="IntAct" id="O22714">
    <property type="interactions" value="1"/>
</dbReference>
<dbReference type="STRING" id="3702.O22714"/>
<dbReference type="PaxDb" id="3702-AT1G60770.1"/>
<dbReference type="ProteomicsDB" id="226494"/>
<dbReference type="DNASU" id="842371"/>
<dbReference type="EnsemblPlants" id="AT1G60770.1">
    <property type="protein sequence ID" value="AT1G60770.1"/>
    <property type="gene ID" value="AT1G60770"/>
</dbReference>
<dbReference type="GeneID" id="842371"/>
<dbReference type="Gramene" id="AT1G60770.1">
    <property type="protein sequence ID" value="AT1G60770.1"/>
    <property type="gene ID" value="AT1G60770"/>
</dbReference>
<dbReference type="KEGG" id="ath:AT1G60770"/>
<dbReference type="Araport" id="AT1G60770"/>
<dbReference type="TAIR" id="AT1G60770">
    <property type="gene designation" value="RPPR4"/>
</dbReference>
<dbReference type="eggNOG" id="KOG4197">
    <property type="taxonomic scope" value="Eukaryota"/>
</dbReference>
<dbReference type="HOGENOM" id="CLU_019802_3_1_1"/>
<dbReference type="InParanoid" id="O22714"/>
<dbReference type="OMA" id="MRHFEQE"/>
<dbReference type="PhylomeDB" id="O22714"/>
<dbReference type="CD-CODE" id="4299E36E">
    <property type="entry name" value="Nucleolus"/>
</dbReference>
<dbReference type="PRO" id="PR:O22714"/>
<dbReference type="Proteomes" id="UP000006548">
    <property type="component" value="Chromosome 1"/>
</dbReference>
<dbReference type="ExpressionAtlas" id="O22714">
    <property type="expression patterns" value="baseline and differential"/>
</dbReference>
<dbReference type="GO" id="GO:0005739">
    <property type="term" value="C:mitochondrion"/>
    <property type="evidence" value="ECO:0007005"/>
    <property type="project" value="TAIR"/>
</dbReference>
<dbReference type="GO" id="GO:1990904">
    <property type="term" value="C:ribonucleoprotein complex"/>
    <property type="evidence" value="ECO:0007669"/>
    <property type="project" value="UniProtKB-KW"/>
</dbReference>
<dbReference type="GO" id="GO:0005840">
    <property type="term" value="C:ribosome"/>
    <property type="evidence" value="ECO:0007669"/>
    <property type="project" value="UniProtKB-KW"/>
</dbReference>
<dbReference type="GO" id="GO:0003729">
    <property type="term" value="F:mRNA binding"/>
    <property type="evidence" value="ECO:0000314"/>
    <property type="project" value="TAIR"/>
</dbReference>
<dbReference type="FunFam" id="1.25.40.10:FF:000443">
    <property type="entry name" value="Pentatricopeptide repeat-containing protein"/>
    <property type="match status" value="1"/>
</dbReference>
<dbReference type="FunFam" id="1.25.40.10:FF:000541">
    <property type="entry name" value="Pentatricopeptide repeat-containing protein"/>
    <property type="match status" value="1"/>
</dbReference>
<dbReference type="Gene3D" id="1.25.40.10">
    <property type="entry name" value="Tetratricopeptide repeat domain"/>
    <property type="match status" value="3"/>
</dbReference>
<dbReference type="InterPro" id="IPR002885">
    <property type="entry name" value="Pentatricopeptide_rpt"/>
</dbReference>
<dbReference type="InterPro" id="IPR011990">
    <property type="entry name" value="TPR-like_helical_dom_sf"/>
</dbReference>
<dbReference type="NCBIfam" id="TIGR00756">
    <property type="entry name" value="PPR"/>
    <property type="match status" value="3"/>
</dbReference>
<dbReference type="PANTHER" id="PTHR45717:SF14">
    <property type="entry name" value="LARGE RIBOSOMAL SUBUNIT PROTEIN ML101 (RPPR4)"/>
    <property type="match status" value="1"/>
</dbReference>
<dbReference type="PANTHER" id="PTHR45717">
    <property type="entry name" value="OS12G0527900 PROTEIN"/>
    <property type="match status" value="1"/>
</dbReference>
<dbReference type="Pfam" id="PF01535">
    <property type="entry name" value="PPR"/>
    <property type="match status" value="4"/>
</dbReference>
<dbReference type="Pfam" id="PF13041">
    <property type="entry name" value="PPR_2"/>
    <property type="match status" value="1"/>
</dbReference>
<dbReference type="SUPFAM" id="SSF48452">
    <property type="entry name" value="TPR-like"/>
    <property type="match status" value="1"/>
</dbReference>
<dbReference type="PROSITE" id="PS51375">
    <property type="entry name" value="PPR"/>
    <property type="match status" value="8"/>
</dbReference>